<dbReference type="EC" id="5.3.1.12" evidence="1"/>
<dbReference type="EMBL" id="AL766846">
    <property type="protein sequence ID" value="CAD46318.1"/>
    <property type="molecule type" value="Genomic_DNA"/>
</dbReference>
<dbReference type="RefSeq" id="WP_000143785.1">
    <property type="nucleotide sequence ID" value="NC_004368.1"/>
</dbReference>
<dbReference type="SMR" id="Q8E6A3"/>
<dbReference type="KEGG" id="san:gbs0674"/>
<dbReference type="eggNOG" id="COG1904">
    <property type="taxonomic scope" value="Bacteria"/>
</dbReference>
<dbReference type="HOGENOM" id="CLU_044465_1_0_9"/>
<dbReference type="UniPathway" id="UPA00246"/>
<dbReference type="Proteomes" id="UP000000823">
    <property type="component" value="Chromosome"/>
</dbReference>
<dbReference type="GO" id="GO:0008880">
    <property type="term" value="F:glucuronate isomerase activity"/>
    <property type="evidence" value="ECO:0007669"/>
    <property type="project" value="UniProtKB-UniRule"/>
</dbReference>
<dbReference type="GO" id="GO:0019698">
    <property type="term" value="P:D-galacturonate catabolic process"/>
    <property type="evidence" value="ECO:0007669"/>
    <property type="project" value="TreeGrafter"/>
</dbReference>
<dbReference type="GO" id="GO:0042840">
    <property type="term" value="P:D-glucuronate catabolic process"/>
    <property type="evidence" value="ECO:0007669"/>
    <property type="project" value="TreeGrafter"/>
</dbReference>
<dbReference type="Gene3D" id="3.20.20.140">
    <property type="entry name" value="Metal-dependent hydrolases"/>
    <property type="match status" value="1"/>
</dbReference>
<dbReference type="Gene3D" id="1.10.2020.10">
    <property type="entry name" value="uronate isomerase, domain 2, chain A"/>
    <property type="match status" value="1"/>
</dbReference>
<dbReference type="HAMAP" id="MF_00675">
    <property type="entry name" value="UxaC"/>
    <property type="match status" value="1"/>
</dbReference>
<dbReference type="InterPro" id="IPR032466">
    <property type="entry name" value="Metal_Hydrolase"/>
</dbReference>
<dbReference type="InterPro" id="IPR003766">
    <property type="entry name" value="Uronate_isomerase"/>
</dbReference>
<dbReference type="NCBIfam" id="NF002794">
    <property type="entry name" value="PRK02925.1"/>
    <property type="match status" value="1"/>
</dbReference>
<dbReference type="PANTHER" id="PTHR30068">
    <property type="entry name" value="URONATE ISOMERASE"/>
    <property type="match status" value="1"/>
</dbReference>
<dbReference type="PANTHER" id="PTHR30068:SF4">
    <property type="entry name" value="URONATE ISOMERASE"/>
    <property type="match status" value="1"/>
</dbReference>
<dbReference type="Pfam" id="PF02614">
    <property type="entry name" value="UxaC"/>
    <property type="match status" value="1"/>
</dbReference>
<dbReference type="SUPFAM" id="SSF51556">
    <property type="entry name" value="Metallo-dependent hydrolases"/>
    <property type="match status" value="1"/>
</dbReference>
<feature type="chain" id="PRO_0000172787" description="Uronate isomerase">
    <location>
        <begin position="1"/>
        <end position="466"/>
    </location>
</feature>
<keyword id="KW-0413">Isomerase</keyword>
<proteinExistence type="inferred from homology"/>
<organism>
    <name type="scientific">Streptococcus agalactiae serotype III (strain NEM316)</name>
    <dbReference type="NCBI Taxonomy" id="211110"/>
    <lineage>
        <taxon>Bacteria</taxon>
        <taxon>Bacillati</taxon>
        <taxon>Bacillota</taxon>
        <taxon>Bacilli</taxon>
        <taxon>Lactobacillales</taxon>
        <taxon>Streptococcaceae</taxon>
        <taxon>Streptococcus</taxon>
    </lineage>
</organism>
<gene>
    <name evidence="1" type="primary">uxaC</name>
    <name type="ordered locus">gbs0674</name>
</gene>
<reference key="1">
    <citation type="journal article" date="2002" name="Mol. Microbiol.">
        <title>Genome sequence of Streptococcus agalactiae, a pathogen causing invasive neonatal disease.</title>
        <authorList>
            <person name="Glaser P."/>
            <person name="Rusniok C."/>
            <person name="Buchrieser C."/>
            <person name="Chevalier F."/>
            <person name="Frangeul L."/>
            <person name="Msadek T."/>
            <person name="Zouine M."/>
            <person name="Couve E."/>
            <person name="Lalioui L."/>
            <person name="Poyart C."/>
            <person name="Trieu-Cuot P."/>
            <person name="Kunst F."/>
        </authorList>
    </citation>
    <scope>NUCLEOTIDE SEQUENCE [LARGE SCALE GENOMIC DNA]</scope>
    <source>
        <strain>NEM316</strain>
    </source>
</reference>
<name>UXAC_STRA3</name>
<protein>
    <recommendedName>
        <fullName evidence="1">Uronate isomerase</fullName>
        <ecNumber evidence="1">5.3.1.12</ecNumber>
    </recommendedName>
    <alternativeName>
        <fullName evidence="1">Glucuronate isomerase</fullName>
    </alternativeName>
    <alternativeName>
        <fullName evidence="1">Uronic isomerase</fullName>
    </alternativeName>
</protein>
<comment type="catalytic activity">
    <reaction evidence="1">
        <text>D-glucuronate = D-fructuronate</text>
        <dbReference type="Rhea" id="RHEA:13049"/>
        <dbReference type="ChEBI" id="CHEBI:58720"/>
        <dbReference type="ChEBI" id="CHEBI:59863"/>
        <dbReference type="EC" id="5.3.1.12"/>
    </reaction>
</comment>
<comment type="catalytic activity">
    <reaction evidence="1">
        <text>aldehydo-D-galacturonate = keto-D-tagaturonate</text>
        <dbReference type="Rhea" id="RHEA:27702"/>
        <dbReference type="ChEBI" id="CHEBI:12952"/>
        <dbReference type="ChEBI" id="CHEBI:17886"/>
        <dbReference type="EC" id="5.3.1.12"/>
    </reaction>
</comment>
<comment type="pathway">
    <text evidence="1">Carbohydrate metabolism; pentose and glucuronate interconversion.</text>
</comment>
<comment type="similarity">
    <text evidence="1">Belongs to the metallo-dependent hydrolases superfamily. Uronate isomerase family.</text>
</comment>
<sequence>MTFNTETFMLKNQAAIQLYEEVKRQPIFDYHCHLDPKDIFEDRIFDNIVDLWLGGDHYKWRLMRANGISEAEITGPASNLEKFKAFARTLERAYGNPVYHWSAMELKNVFGVNEILTESNAEEIYHRLNHFLKEHKISPRRLIADSKVMFIGTTDYPLDTLKWHKKLAADESFKTVVAPTFRPDEAFIEHRHFVDFITKLGDITQKEITDFSTFIAAMEERIAYFAQNGCRASDISFTEIVFEQTDELELNDLFNKVCEGYIPNQSEISKWQTAVFMELCRLYKKYGFVTQVHFGALRNNHSTIFEKLGADVGVDSLGDQVALTVNMNRLLDSLVKKDSLPKMIWYNLNPAYNIAVANTLANFQANELGVRSYLQFGAGWWFADTKLGMISQMNALAEQGMLANFIGMLTDSRSFLSYQRHDYFRRILCTYLGEWIEEGEVPEDYQALGSMAKDIAYQNAVNYFKN</sequence>
<accession>Q8E6A3</accession>
<evidence type="ECO:0000255" key="1">
    <source>
        <dbReference type="HAMAP-Rule" id="MF_00675"/>
    </source>
</evidence>